<gene>
    <name evidence="1" type="primary">xerD</name>
    <name type="ordered locus">VV0665</name>
</gene>
<organism>
    <name type="scientific">Vibrio vulnificus (strain YJ016)</name>
    <dbReference type="NCBI Taxonomy" id="196600"/>
    <lineage>
        <taxon>Bacteria</taxon>
        <taxon>Pseudomonadati</taxon>
        <taxon>Pseudomonadota</taxon>
        <taxon>Gammaproteobacteria</taxon>
        <taxon>Vibrionales</taxon>
        <taxon>Vibrionaceae</taxon>
        <taxon>Vibrio</taxon>
    </lineage>
</organism>
<name>XERD_VIBVY</name>
<dbReference type="EMBL" id="BA000037">
    <property type="protein sequence ID" value="BAC93429.1"/>
    <property type="status" value="ALT_INIT"/>
    <property type="molecule type" value="Genomic_DNA"/>
</dbReference>
<dbReference type="RefSeq" id="WP_011078618.1">
    <property type="nucleotide sequence ID" value="NC_005139.1"/>
</dbReference>
<dbReference type="SMR" id="Q7MNQ0"/>
<dbReference type="STRING" id="672.VV93_v1c06040"/>
<dbReference type="KEGG" id="vvy:VV0665"/>
<dbReference type="eggNOG" id="COG4974">
    <property type="taxonomic scope" value="Bacteria"/>
</dbReference>
<dbReference type="HOGENOM" id="CLU_027562_9_0_6"/>
<dbReference type="Proteomes" id="UP000002675">
    <property type="component" value="Chromosome I"/>
</dbReference>
<dbReference type="GO" id="GO:0005737">
    <property type="term" value="C:cytoplasm"/>
    <property type="evidence" value="ECO:0007669"/>
    <property type="project" value="UniProtKB-SubCell"/>
</dbReference>
<dbReference type="GO" id="GO:0003677">
    <property type="term" value="F:DNA binding"/>
    <property type="evidence" value="ECO:0007669"/>
    <property type="project" value="UniProtKB-KW"/>
</dbReference>
<dbReference type="GO" id="GO:0009037">
    <property type="term" value="F:tyrosine-based site-specific recombinase activity"/>
    <property type="evidence" value="ECO:0007669"/>
    <property type="project" value="UniProtKB-UniRule"/>
</dbReference>
<dbReference type="GO" id="GO:0051301">
    <property type="term" value="P:cell division"/>
    <property type="evidence" value="ECO:0007669"/>
    <property type="project" value="UniProtKB-KW"/>
</dbReference>
<dbReference type="GO" id="GO:0007059">
    <property type="term" value="P:chromosome segregation"/>
    <property type="evidence" value="ECO:0007669"/>
    <property type="project" value="UniProtKB-UniRule"/>
</dbReference>
<dbReference type="GO" id="GO:0006313">
    <property type="term" value="P:DNA transposition"/>
    <property type="evidence" value="ECO:0007669"/>
    <property type="project" value="UniProtKB-UniRule"/>
</dbReference>
<dbReference type="CDD" id="cd00798">
    <property type="entry name" value="INT_XerDC_C"/>
    <property type="match status" value="1"/>
</dbReference>
<dbReference type="Gene3D" id="1.10.150.130">
    <property type="match status" value="1"/>
</dbReference>
<dbReference type="Gene3D" id="1.10.443.10">
    <property type="entry name" value="Intergrase catalytic core"/>
    <property type="match status" value="1"/>
</dbReference>
<dbReference type="HAMAP" id="MF_01808">
    <property type="entry name" value="Recomb_XerC_XerD"/>
    <property type="match status" value="1"/>
</dbReference>
<dbReference type="HAMAP" id="MF_01807">
    <property type="entry name" value="Recomb_XerD"/>
    <property type="match status" value="1"/>
</dbReference>
<dbReference type="InterPro" id="IPR044068">
    <property type="entry name" value="CB"/>
</dbReference>
<dbReference type="InterPro" id="IPR011010">
    <property type="entry name" value="DNA_brk_join_enz"/>
</dbReference>
<dbReference type="InterPro" id="IPR013762">
    <property type="entry name" value="Integrase-like_cat_sf"/>
</dbReference>
<dbReference type="InterPro" id="IPR002104">
    <property type="entry name" value="Integrase_catalytic"/>
</dbReference>
<dbReference type="InterPro" id="IPR010998">
    <property type="entry name" value="Integrase_recombinase_N"/>
</dbReference>
<dbReference type="InterPro" id="IPR004107">
    <property type="entry name" value="Integrase_SAM-like_N"/>
</dbReference>
<dbReference type="InterPro" id="IPR011932">
    <property type="entry name" value="Recomb_XerD"/>
</dbReference>
<dbReference type="InterPro" id="IPR023009">
    <property type="entry name" value="Tyrosine_recombinase_XerC/XerD"/>
</dbReference>
<dbReference type="InterPro" id="IPR050090">
    <property type="entry name" value="Tyrosine_recombinase_XerCD"/>
</dbReference>
<dbReference type="NCBIfam" id="NF001399">
    <property type="entry name" value="PRK00283.1"/>
    <property type="match status" value="1"/>
</dbReference>
<dbReference type="NCBIfam" id="TIGR02225">
    <property type="entry name" value="recomb_XerD"/>
    <property type="match status" value="1"/>
</dbReference>
<dbReference type="PANTHER" id="PTHR30349">
    <property type="entry name" value="PHAGE INTEGRASE-RELATED"/>
    <property type="match status" value="1"/>
</dbReference>
<dbReference type="PANTHER" id="PTHR30349:SF90">
    <property type="entry name" value="TYROSINE RECOMBINASE XERD"/>
    <property type="match status" value="1"/>
</dbReference>
<dbReference type="Pfam" id="PF02899">
    <property type="entry name" value="Phage_int_SAM_1"/>
    <property type="match status" value="1"/>
</dbReference>
<dbReference type="Pfam" id="PF00589">
    <property type="entry name" value="Phage_integrase"/>
    <property type="match status" value="1"/>
</dbReference>
<dbReference type="SUPFAM" id="SSF56349">
    <property type="entry name" value="DNA breaking-rejoining enzymes"/>
    <property type="match status" value="1"/>
</dbReference>
<dbReference type="SUPFAM" id="SSF47823">
    <property type="entry name" value="lambda integrase-like, N-terminal domain"/>
    <property type="match status" value="1"/>
</dbReference>
<dbReference type="PROSITE" id="PS51900">
    <property type="entry name" value="CB"/>
    <property type="match status" value="1"/>
</dbReference>
<dbReference type="PROSITE" id="PS51898">
    <property type="entry name" value="TYR_RECOMBINASE"/>
    <property type="match status" value="1"/>
</dbReference>
<feature type="chain" id="PRO_0000095429" description="Tyrosine recombinase XerD">
    <location>
        <begin position="1"/>
        <end position="305"/>
    </location>
</feature>
<feature type="domain" description="Core-binding (CB)" evidence="3">
    <location>
        <begin position="9"/>
        <end position="94"/>
    </location>
</feature>
<feature type="domain" description="Tyr recombinase" evidence="2">
    <location>
        <begin position="115"/>
        <end position="299"/>
    </location>
</feature>
<feature type="active site" evidence="1">
    <location>
        <position position="155"/>
    </location>
</feature>
<feature type="active site" evidence="1">
    <location>
        <position position="179"/>
    </location>
</feature>
<feature type="active site" evidence="1">
    <location>
        <position position="251"/>
    </location>
</feature>
<feature type="active site" evidence="1">
    <location>
        <position position="254"/>
    </location>
</feature>
<feature type="active site" evidence="1">
    <location>
        <position position="277"/>
    </location>
</feature>
<feature type="active site" description="O-(3'-phospho-DNA)-tyrosine intermediate" evidence="1">
    <location>
        <position position="286"/>
    </location>
</feature>
<comment type="function">
    <text evidence="1">Site-specific tyrosine recombinase, which acts by catalyzing the cutting and rejoining of the recombining DNA molecules. The XerC-XerD complex is essential to convert dimers of the bacterial chromosome into monomers to permit their segregation at cell division. It also contributes to the segregational stability of plasmids.</text>
</comment>
<comment type="subunit">
    <text evidence="1">Forms a cyclic heterotetrameric complex composed of two molecules of XerC and two molecules of XerD.</text>
</comment>
<comment type="subcellular location">
    <subcellularLocation>
        <location evidence="1">Cytoplasm</location>
    </subcellularLocation>
</comment>
<comment type="similarity">
    <text evidence="1">Belongs to the 'phage' integrase family. XerD subfamily.</text>
</comment>
<comment type="sequence caution" evidence="4">
    <conflict type="erroneous initiation">
        <sequence resource="EMBL-CDS" id="BAC93429"/>
    </conflict>
</comment>
<sequence length="305" mass="35086">MQQTASVNMQDFGYVEQFLDAMWMERGLAENTLASYRNDLMKLLQWMEANHYRLDFISLSGLQQYQSYLVDQDYKQTSRARMLSAIRRLFQYLHREKVRADDPSALLVSPKLPQRLPKDISEEQVDALLDAPDPNDPVELRDKAMLELLYATGLRVTELVSLTMENISLRQGVVRVTGKGGKERLVPMGENAIDWIETFIKQGRPALLGETSSDVVFPSKRARQMTRQTFWHRIKFYAVIAGIDTDHLSPHVLRHAFATHLLNYGADLRVVQMLLGHSDLSTTQIYTHVATERLKQIHSQHHPRA</sequence>
<proteinExistence type="inferred from homology"/>
<reference key="1">
    <citation type="journal article" date="2003" name="Genome Res.">
        <title>Comparative genome analysis of Vibrio vulnificus, a marine pathogen.</title>
        <authorList>
            <person name="Chen C.-Y."/>
            <person name="Wu K.-M."/>
            <person name="Chang Y.-C."/>
            <person name="Chang C.-H."/>
            <person name="Tsai H.-C."/>
            <person name="Liao T.-L."/>
            <person name="Liu Y.-M."/>
            <person name="Chen H.-J."/>
            <person name="Shen A.B.-T."/>
            <person name="Li J.-C."/>
            <person name="Su T.-L."/>
            <person name="Shao C.-P."/>
            <person name="Lee C.-T."/>
            <person name="Hor L.-I."/>
            <person name="Tsai S.-F."/>
        </authorList>
    </citation>
    <scope>NUCLEOTIDE SEQUENCE [LARGE SCALE GENOMIC DNA]</scope>
    <source>
        <strain>YJ016</strain>
    </source>
</reference>
<keyword id="KW-0131">Cell cycle</keyword>
<keyword id="KW-0132">Cell division</keyword>
<keyword id="KW-0159">Chromosome partition</keyword>
<keyword id="KW-0963">Cytoplasm</keyword>
<keyword id="KW-0229">DNA integration</keyword>
<keyword id="KW-0233">DNA recombination</keyword>
<keyword id="KW-0238">DNA-binding</keyword>
<protein>
    <recommendedName>
        <fullName evidence="1">Tyrosine recombinase XerD</fullName>
    </recommendedName>
</protein>
<evidence type="ECO:0000255" key="1">
    <source>
        <dbReference type="HAMAP-Rule" id="MF_01807"/>
    </source>
</evidence>
<evidence type="ECO:0000255" key="2">
    <source>
        <dbReference type="PROSITE-ProRule" id="PRU01246"/>
    </source>
</evidence>
<evidence type="ECO:0000255" key="3">
    <source>
        <dbReference type="PROSITE-ProRule" id="PRU01248"/>
    </source>
</evidence>
<evidence type="ECO:0000305" key="4"/>
<accession>Q7MNQ0</accession>